<gene>
    <name evidence="1" type="primary">bchL</name>
    <name type="ordered locus">Plut_0217</name>
</gene>
<name>BCHL_CHLL3</name>
<accession>Q3B6C6</accession>
<evidence type="ECO:0000255" key="1">
    <source>
        <dbReference type="HAMAP-Rule" id="MF_00355"/>
    </source>
</evidence>
<dbReference type="EC" id="1.3.7.7" evidence="1"/>
<dbReference type="EMBL" id="CP000096">
    <property type="protein sequence ID" value="ABB23105.1"/>
    <property type="molecule type" value="Genomic_DNA"/>
</dbReference>
<dbReference type="RefSeq" id="WP_011356980.1">
    <property type="nucleotide sequence ID" value="NC_007512.1"/>
</dbReference>
<dbReference type="SMR" id="Q3B6C6"/>
<dbReference type="STRING" id="319225.Plut_0217"/>
<dbReference type="KEGG" id="plt:Plut_0217"/>
<dbReference type="eggNOG" id="COG1348">
    <property type="taxonomic scope" value="Bacteria"/>
</dbReference>
<dbReference type="HOGENOM" id="CLU_059373_2_0_10"/>
<dbReference type="OrthoDB" id="9778641at2"/>
<dbReference type="UniPathway" id="UPA00671"/>
<dbReference type="Proteomes" id="UP000002709">
    <property type="component" value="Chromosome"/>
</dbReference>
<dbReference type="GO" id="GO:0051539">
    <property type="term" value="F:4 iron, 4 sulfur cluster binding"/>
    <property type="evidence" value="ECO:0007669"/>
    <property type="project" value="UniProtKB-UniRule"/>
</dbReference>
<dbReference type="GO" id="GO:0005524">
    <property type="term" value="F:ATP binding"/>
    <property type="evidence" value="ECO:0007669"/>
    <property type="project" value="UniProtKB-UniRule"/>
</dbReference>
<dbReference type="GO" id="GO:0046872">
    <property type="term" value="F:metal ion binding"/>
    <property type="evidence" value="ECO:0007669"/>
    <property type="project" value="UniProtKB-KW"/>
</dbReference>
<dbReference type="GO" id="GO:0016730">
    <property type="term" value="F:oxidoreductase activity, acting on iron-sulfur proteins as donors"/>
    <property type="evidence" value="ECO:0007669"/>
    <property type="project" value="InterPro"/>
</dbReference>
<dbReference type="GO" id="GO:0016636">
    <property type="term" value="F:oxidoreductase activity, acting on the CH-CH group of donors, iron-sulfur protein as acceptor"/>
    <property type="evidence" value="ECO:0007669"/>
    <property type="project" value="UniProtKB-UniRule"/>
</dbReference>
<dbReference type="GO" id="GO:0036070">
    <property type="term" value="P:light-independent bacteriochlorophyll biosynthetic process"/>
    <property type="evidence" value="ECO:0007669"/>
    <property type="project" value="UniProtKB-UniRule"/>
</dbReference>
<dbReference type="GO" id="GO:0019685">
    <property type="term" value="P:photosynthesis, dark reaction"/>
    <property type="evidence" value="ECO:0007669"/>
    <property type="project" value="InterPro"/>
</dbReference>
<dbReference type="CDD" id="cd02032">
    <property type="entry name" value="Bchl-like"/>
    <property type="match status" value="1"/>
</dbReference>
<dbReference type="Gene3D" id="3.40.50.300">
    <property type="entry name" value="P-loop containing nucleotide triphosphate hydrolases"/>
    <property type="match status" value="1"/>
</dbReference>
<dbReference type="HAMAP" id="MF_00355">
    <property type="entry name" value="ChlL_BchL"/>
    <property type="match status" value="1"/>
</dbReference>
<dbReference type="InterPro" id="IPR030655">
    <property type="entry name" value="NifH/chlL_CS"/>
</dbReference>
<dbReference type="InterPro" id="IPR000392">
    <property type="entry name" value="NifH/frxC"/>
</dbReference>
<dbReference type="InterPro" id="IPR027417">
    <property type="entry name" value="P-loop_NTPase"/>
</dbReference>
<dbReference type="InterPro" id="IPR005971">
    <property type="entry name" value="Protochlorophyllide_ATP-bd"/>
</dbReference>
<dbReference type="NCBIfam" id="TIGR01281">
    <property type="entry name" value="DPOR_bchL"/>
    <property type="match status" value="1"/>
</dbReference>
<dbReference type="PANTHER" id="PTHR42864">
    <property type="entry name" value="LIGHT-INDEPENDENT PROTOCHLOROPHYLLIDE REDUCTASE IRON-SULFUR ATP-BINDING PROTEIN"/>
    <property type="match status" value="1"/>
</dbReference>
<dbReference type="PANTHER" id="PTHR42864:SF2">
    <property type="entry name" value="LIGHT-INDEPENDENT PROTOCHLOROPHYLLIDE REDUCTASE IRON-SULFUR ATP-BINDING PROTEIN"/>
    <property type="match status" value="1"/>
</dbReference>
<dbReference type="Pfam" id="PF00142">
    <property type="entry name" value="Fer4_NifH"/>
    <property type="match status" value="1"/>
</dbReference>
<dbReference type="PIRSF" id="PIRSF000363">
    <property type="entry name" value="Nitrogenase_iron"/>
    <property type="match status" value="1"/>
</dbReference>
<dbReference type="PRINTS" id="PR00091">
    <property type="entry name" value="NITROGNASEII"/>
</dbReference>
<dbReference type="SUPFAM" id="SSF52540">
    <property type="entry name" value="P-loop containing nucleoside triphosphate hydrolases"/>
    <property type="match status" value="1"/>
</dbReference>
<dbReference type="PROSITE" id="PS00746">
    <property type="entry name" value="NIFH_FRXC_1"/>
    <property type="match status" value="1"/>
</dbReference>
<dbReference type="PROSITE" id="PS00692">
    <property type="entry name" value="NIFH_FRXC_2"/>
    <property type="match status" value="1"/>
</dbReference>
<dbReference type="PROSITE" id="PS51026">
    <property type="entry name" value="NIFH_FRXC_3"/>
    <property type="match status" value="1"/>
</dbReference>
<keyword id="KW-0004">4Fe-4S</keyword>
<keyword id="KW-0067">ATP-binding</keyword>
<keyword id="KW-0077">Bacteriochlorophyll biosynthesis</keyword>
<keyword id="KW-0149">Chlorophyll biosynthesis</keyword>
<keyword id="KW-0408">Iron</keyword>
<keyword id="KW-0411">Iron-sulfur</keyword>
<keyword id="KW-0460">Magnesium</keyword>
<keyword id="KW-0479">Metal-binding</keyword>
<keyword id="KW-0547">Nucleotide-binding</keyword>
<keyword id="KW-0560">Oxidoreductase</keyword>
<keyword id="KW-0602">Photosynthesis</keyword>
<keyword id="KW-1185">Reference proteome</keyword>
<protein>
    <recommendedName>
        <fullName evidence="1">Light-independent protochlorophyllide reductase iron-sulfur ATP-binding protein</fullName>
        <shortName evidence="1">DPOR subunit L</shortName>
        <shortName evidence="1">LI-POR subunit L</shortName>
        <ecNumber evidence="1">1.3.7.7</ecNumber>
    </recommendedName>
</protein>
<sequence length="276" mass="29532">MSLVLAVYGKGGIGKSTTSANISAALALKGAKVLQIGCDPKHDSTFPITGKLQKTVIEALEEVDFHHEELTAEDVIETGFAGIDGLEAGGPPAGSGCGGYVVGESVTLLQELGLYDKYDVILFDVLGDVVCGGFSAPLNYADYAIIIATNDFDSIFAANRLCMAIQQKSVRYKVKLAGIVANRVDYAKGGGTNMLDQFAEKVGTRLLAKVPYHELIRRSRFAGKTLFAMDDSEEGKEECLQPYLQIAEDLLSEAPMSSVPVPIGDREIFEIVGGWQ</sequence>
<reference key="1">
    <citation type="submission" date="2005-08" db="EMBL/GenBank/DDBJ databases">
        <title>Complete sequence of Pelodictyon luteolum DSM 273.</title>
        <authorList>
            <consortium name="US DOE Joint Genome Institute"/>
            <person name="Copeland A."/>
            <person name="Lucas S."/>
            <person name="Lapidus A."/>
            <person name="Barry K."/>
            <person name="Detter J.C."/>
            <person name="Glavina T."/>
            <person name="Hammon N."/>
            <person name="Israni S."/>
            <person name="Pitluck S."/>
            <person name="Bryant D."/>
            <person name="Schmutz J."/>
            <person name="Larimer F."/>
            <person name="Land M."/>
            <person name="Kyrpides N."/>
            <person name="Ivanova N."/>
            <person name="Richardson P."/>
        </authorList>
    </citation>
    <scope>NUCLEOTIDE SEQUENCE [LARGE SCALE GENOMIC DNA]</scope>
    <source>
        <strain>DSM 273 / BCRC 81028 / 2530</strain>
    </source>
</reference>
<proteinExistence type="inferred from homology"/>
<organism>
    <name type="scientific">Chlorobium luteolum (strain DSM 273 / BCRC 81028 / 2530)</name>
    <name type="common">Pelodictyon luteolum</name>
    <dbReference type="NCBI Taxonomy" id="319225"/>
    <lineage>
        <taxon>Bacteria</taxon>
        <taxon>Pseudomonadati</taxon>
        <taxon>Chlorobiota</taxon>
        <taxon>Chlorobiia</taxon>
        <taxon>Chlorobiales</taxon>
        <taxon>Chlorobiaceae</taxon>
        <taxon>Chlorobium/Pelodictyon group</taxon>
        <taxon>Pelodictyon</taxon>
    </lineage>
</organism>
<feature type="chain" id="PRO_1000048465" description="Light-independent protochlorophyllide reductase iron-sulfur ATP-binding protein">
    <location>
        <begin position="1"/>
        <end position="276"/>
    </location>
</feature>
<feature type="binding site" evidence="1">
    <location>
        <begin position="12"/>
        <end position="17"/>
    </location>
    <ligand>
        <name>ATP</name>
        <dbReference type="ChEBI" id="CHEBI:30616"/>
    </ligand>
</feature>
<feature type="binding site" evidence="1">
    <location>
        <position position="16"/>
    </location>
    <ligand>
        <name>Mg(2+)</name>
        <dbReference type="ChEBI" id="CHEBI:18420"/>
    </ligand>
</feature>
<feature type="binding site" evidence="1">
    <location>
        <position position="41"/>
    </location>
    <ligand>
        <name>ATP</name>
        <dbReference type="ChEBI" id="CHEBI:30616"/>
    </ligand>
</feature>
<feature type="binding site" evidence="1">
    <location>
        <position position="97"/>
    </location>
    <ligand>
        <name>[4Fe-4S] cluster</name>
        <dbReference type="ChEBI" id="CHEBI:49883"/>
        <note>ligand shared between dimeric partners</note>
    </ligand>
</feature>
<feature type="binding site" evidence="1">
    <location>
        <position position="131"/>
    </location>
    <ligand>
        <name>[4Fe-4S] cluster</name>
        <dbReference type="ChEBI" id="CHEBI:49883"/>
        <note>ligand shared between dimeric partners</note>
    </ligand>
</feature>
<feature type="binding site" evidence="1">
    <location>
        <begin position="182"/>
        <end position="183"/>
    </location>
    <ligand>
        <name>ATP</name>
        <dbReference type="ChEBI" id="CHEBI:30616"/>
    </ligand>
</feature>
<comment type="function">
    <text evidence="1">Component of the dark-operative protochlorophyllide reductase (DPOR) that uses Mg-ATP and reduced ferredoxin to reduce ring D of protochlorophyllide (Pchlide) to form chlorophyllide a (Chlide). This reaction is light-independent. The L component serves as a unique electron donor to the NB-component of the complex, and binds Mg-ATP.</text>
</comment>
<comment type="catalytic activity">
    <reaction evidence="1">
        <text>chlorophyllide a + oxidized 2[4Fe-4S]-[ferredoxin] + 2 ADP + 2 phosphate = protochlorophyllide a + reduced 2[4Fe-4S]-[ferredoxin] + 2 ATP + 2 H2O</text>
        <dbReference type="Rhea" id="RHEA:28202"/>
        <dbReference type="Rhea" id="RHEA-COMP:10002"/>
        <dbReference type="Rhea" id="RHEA-COMP:10004"/>
        <dbReference type="ChEBI" id="CHEBI:15377"/>
        <dbReference type="ChEBI" id="CHEBI:30616"/>
        <dbReference type="ChEBI" id="CHEBI:33722"/>
        <dbReference type="ChEBI" id="CHEBI:33723"/>
        <dbReference type="ChEBI" id="CHEBI:43474"/>
        <dbReference type="ChEBI" id="CHEBI:83348"/>
        <dbReference type="ChEBI" id="CHEBI:83350"/>
        <dbReference type="ChEBI" id="CHEBI:456216"/>
        <dbReference type="EC" id="1.3.7.7"/>
    </reaction>
</comment>
<comment type="cofactor">
    <cofactor evidence="1">
        <name>[4Fe-4S] cluster</name>
        <dbReference type="ChEBI" id="CHEBI:49883"/>
    </cofactor>
    <text evidence="1">Binds 1 [4Fe-4S] cluster per dimer.</text>
</comment>
<comment type="pathway">
    <text evidence="1">Porphyrin-containing compound metabolism; bacteriochlorophyll biosynthesis (light-independent).</text>
</comment>
<comment type="subunit">
    <text evidence="1">Homodimer. Protochlorophyllide reductase is composed of three subunits; BchL, BchN and BchB.</text>
</comment>
<comment type="similarity">
    <text evidence="1">Belongs to the NifH/BchL/ChlL family.</text>
</comment>